<reference key="1">
    <citation type="journal article" date="2013" name="ACS Chem. Biol.">
        <title>Two related pyrrolidinedione synthetase loci in Fusarium heterosporum ATCC 74349 produce divergent metabolites.</title>
        <authorList>
            <person name="Kakule T.B."/>
            <person name="Sardar D."/>
            <person name="Lin Z."/>
            <person name="Schmidt E.W."/>
        </authorList>
    </citation>
    <scope>NUCLEOTIDE SEQUENCE [GENOMIC DNA]</scope>
    <scope>FUNCTION</scope>
    <source>
        <strain>ATCC 74349 / MF6069</strain>
    </source>
</reference>
<comment type="function">
    <text evidence="6">Efflux pump that might be required for efficient secretion of equisetin or other secondary metabolies produced by the equisetin gene cluster (PubMed:23614392).</text>
</comment>
<comment type="subcellular location">
    <subcellularLocation>
        <location evidence="5">Cell membrane</location>
        <topology evidence="1">Multi-pass membrane protein</topology>
    </subcellularLocation>
</comment>
<comment type="similarity">
    <text evidence="5">Belongs to the major facilitator superfamily.</text>
</comment>
<keyword id="KW-1003">Cell membrane</keyword>
<keyword id="KW-0325">Glycoprotein</keyword>
<keyword id="KW-0472">Membrane</keyword>
<keyword id="KW-0812">Transmembrane</keyword>
<keyword id="KW-1133">Transmembrane helix</keyword>
<name>EQXG_FUSHE</name>
<gene>
    <name evidence="4" type="primary">eqxG</name>
</gene>
<protein>
    <recommendedName>
        <fullName evidence="4">MFS transporter eqxG</fullName>
    </recommendedName>
    <alternativeName>
        <fullName evidence="4">Equisetin biosynthesis protein G</fullName>
    </alternativeName>
</protein>
<sequence length="481" mass="51979">MATTDPAIAAPDDSQLEAGRENIRANVGDALEKPSSSTGTMVDEPTDPNVVDWDGPHDPEHPLNWSKTQKNLHLVIVSLFTLAANLAATMFAPGAEELATEFSITNSTVTAMTVSLYVLGFALGPLLLAPLSELYGRLVIYYGCNFVYVVFTIGCAFSTNVAMFLVFRIICGCAASGPMSIGGGTVADLFPQEERGKAMALFTVGPLLGPSGLIGVATVIFMRETNYMVLLQRKAQRARKETGNDKLVPKLTRNETPKQMLARAIVRPLKLLIFSPIVLLISLYTGILFGLIFLLFTTFPSVFQDVYGFSPGTAGLAYLGLGIGMILGLVLFSVLSDKMLKQKSGAARPEDRLILMKWLGPITPLGLFIYGWTAKYAVHWIVPIIGTFVVGFGSLFVVIPGQIYLVDAFGAEAAASAMAANLLVRSPFGAFLDLTASPLYVSLGLGWGNSVLGFICLLFTPVPWLFYTYGERMRTHFKVDL</sequence>
<feature type="chain" id="PRO_0000441310" description="MFS transporter eqxG">
    <location>
        <begin position="1"/>
        <end position="481"/>
    </location>
</feature>
<feature type="transmembrane region" description="Helical" evidence="1">
    <location>
        <begin position="72"/>
        <end position="92"/>
    </location>
</feature>
<feature type="transmembrane region" description="Helical" evidence="1">
    <location>
        <begin position="111"/>
        <end position="131"/>
    </location>
</feature>
<feature type="transmembrane region" description="Helical" evidence="1">
    <location>
        <begin position="146"/>
        <end position="166"/>
    </location>
</feature>
<feature type="transmembrane region" description="Helical" evidence="1">
    <location>
        <begin position="169"/>
        <end position="189"/>
    </location>
</feature>
<feature type="transmembrane region" description="Helical" evidence="1">
    <location>
        <begin position="201"/>
        <end position="221"/>
    </location>
</feature>
<feature type="transmembrane region" description="Helical" evidence="1">
    <location>
        <begin position="276"/>
        <end position="296"/>
    </location>
</feature>
<feature type="transmembrane region" description="Helical" evidence="1">
    <location>
        <begin position="315"/>
        <end position="335"/>
    </location>
</feature>
<feature type="transmembrane region" description="Helical" evidence="1">
    <location>
        <begin position="353"/>
        <end position="373"/>
    </location>
</feature>
<feature type="transmembrane region" description="Helical" evidence="1">
    <location>
        <begin position="380"/>
        <end position="400"/>
    </location>
</feature>
<feature type="transmembrane region" description="Helical" evidence="1">
    <location>
        <begin position="403"/>
        <end position="423"/>
    </location>
</feature>
<feature type="transmembrane region" description="Helical" evidence="1">
    <location>
        <begin position="439"/>
        <end position="459"/>
    </location>
</feature>
<feature type="region of interest" description="Disordered" evidence="3">
    <location>
        <begin position="1"/>
        <end position="58"/>
    </location>
</feature>
<feature type="compositionally biased region" description="Low complexity" evidence="3">
    <location>
        <begin position="1"/>
        <end position="13"/>
    </location>
</feature>
<feature type="glycosylation site" description="N-linked (GlcNAc...) asparagine" evidence="2">
    <location>
        <position position="64"/>
    </location>
</feature>
<feature type="glycosylation site" description="N-linked (GlcNAc...) asparagine" evidence="2">
    <location>
        <position position="106"/>
    </location>
</feature>
<accession>S4W288</accession>
<evidence type="ECO:0000255" key="1"/>
<evidence type="ECO:0000255" key="2">
    <source>
        <dbReference type="PROSITE-ProRule" id="PRU00498"/>
    </source>
</evidence>
<evidence type="ECO:0000256" key="3">
    <source>
        <dbReference type="SAM" id="MobiDB-lite"/>
    </source>
</evidence>
<evidence type="ECO:0000303" key="4">
    <source>
    </source>
</evidence>
<evidence type="ECO:0000305" key="5"/>
<evidence type="ECO:0000305" key="6">
    <source>
    </source>
</evidence>
<organism>
    <name type="scientific">Fusarium heterosporum</name>
    <dbReference type="NCBI Taxonomy" id="42747"/>
    <lineage>
        <taxon>Eukaryota</taxon>
        <taxon>Fungi</taxon>
        <taxon>Dikarya</taxon>
        <taxon>Ascomycota</taxon>
        <taxon>Pezizomycotina</taxon>
        <taxon>Sordariomycetes</taxon>
        <taxon>Hypocreomycetidae</taxon>
        <taxon>Hypocreales</taxon>
        <taxon>Nectriaceae</taxon>
        <taxon>Fusarium</taxon>
        <taxon>Fusarium heterosporum species complex</taxon>
    </lineage>
</organism>
<dbReference type="EMBL" id="KC439347">
    <property type="protein sequence ID" value="AGO86666.1"/>
    <property type="molecule type" value="Genomic_DNA"/>
</dbReference>
<dbReference type="GlyCosmos" id="S4W288">
    <property type="glycosylation" value="2 sites, No reported glycans"/>
</dbReference>
<dbReference type="GO" id="GO:0005886">
    <property type="term" value="C:plasma membrane"/>
    <property type="evidence" value="ECO:0007669"/>
    <property type="project" value="UniProtKB-SubCell"/>
</dbReference>
<dbReference type="GO" id="GO:0022857">
    <property type="term" value="F:transmembrane transporter activity"/>
    <property type="evidence" value="ECO:0007669"/>
    <property type="project" value="InterPro"/>
</dbReference>
<dbReference type="CDD" id="cd17323">
    <property type="entry name" value="MFS_Tpo1_MDR_like"/>
    <property type="match status" value="1"/>
</dbReference>
<dbReference type="FunFam" id="1.20.1250.20:FF:000082">
    <property type="entry name" value="MFS multidrug transporter, putative"/>
    <property type="match status" value="1"/>
</dbReference>
<dbReference type="Gene3D" id="1.20.1250.20">
    <property type="entry name" value="MFS general substrate transporter like domains"/>
    <property type="match status" value="1"/>
</dbReference>
<dbReference type="InterPro" id="IPR011701">
    <property type="entry name" value="MFS"/>
</dbReference>
<dbReference type="InterPro" id="IPR020846">
    <property type="entry name" value="MFS_dom"/>
</dbReference>
<dbReference type="InterPro" id="IPR036259">
    <property type="entry name" value="MFS_trans_sf"/>
</dbReference>
<dbReference type="PANTHER" id="PTHR23502">
    <property type="entry name" value="MAJOR FACILITATOR SUPERFAMILY"/>
    <property type="match status" value="1"/>
</dbReference>
<dbReference type="PANTHER" id="PTHR23502:SF68">
    <property type="entry name" value="MULTIDRUG TRANSPORTER, PUTATIVE (AFU_ORTHOLOGUE AFUA_3G01120)-RELATED"/>
    <property type="match status" value="1"/>
</dbReference>
<dbReference type="Pfam" id="PF07690">
    <property type="entry name" value="MFS_1"/>
    <property type="match status" value="1"/>
</dbReference>
<dbReference type="SUPFAM" id="SSF103473">
    <property type="entry name" value="MFS general substrate transporter"/>
    <property type="match status" value="1"/>
</dbReference>
<dbReference type="PROSITE" id="PS50850">
    <property type="entry name" value="MFS"/>
    <property type="match status" value="1"/>
</dbReference>
<proteinExistence type="inferred from homology"/>